<gene>
    <name evidence="1" type="primary">ezrA</name>
    <name type="ordered locus">LMOf2365_1616</name>
</gene>
<reference key="1">
    <citation type="journal article" date="2004" name="Nucleic Acids Res.">
        <title>Whole genome comparisons of serotype 4b and 1/2a strains of the food-borne pathogen Listeria monocytogenes reveal new insights into the core genome components of this species.</title>
        <authorList>
            <person name="Nelson K.E."/>
            <person name="Fouts D.E."/>
            <person name="Mongodin E.F."/>
            <person name="Ravel J."/>
            <person name="DeBoy R.T."/>
            <person name="Kolonay J.F."/>
            <person name="Rasko D.A."/>
            <person name="Angiuoli S.V."/>
            <person name="Gill S.R."/>
            <person name="Paulsen I.T."/>
            <person name="Peterson J.D."/>
            <person name="White O."/>
            <person name="Nelson W.C."/>
            <person name="Nierman W.C."/>
            <person name="Beanan M.J."/>
            <person name="Brinkac L.M."/>
            <person name="Daugherty S.C."/>
            <person name="Dodson R.J."/>
            <person name="Durkin A.S."/>
            <person name="Madupu R."/>
            <person name="Haft D.H."/>
            <person name="Selengut J."/>
            <person name="Van Aken S.E."/>
            <person name="Khouri H.M."/>
            <person name="Fedorova N."/>
            <person name="Forberger H.A."/>
            <person name="Tran B."/>
            <person name="Kathariou S."/>
            <person name="Wonderling L.D."/>
            <person name="Uhlich G.A."/>
            <person name="Bayles D.O."/>
            <person name="Luchansky J.B."/>
            <person name="Fraser C.M."/>
        </authorList>
    </citation>
    <scope>NUCLEOTIDE SEQUENCE [LARGE SCALE GENOMIC DNA]</scope>
    <source>
        <strain>F2365</strain>
    </source>
</reference>
<comment type="function">
    <text evidence="1">Negative regulator of FtsZ ring formation; modulates the frequency and position of FtsZ ring formation. Inhibits FtsZ ring formation at polar sites. Interacts either with FtsZ or with one of its binding partners to promote depolymerization.</text>
</comment>
<comment type="subcellular location">
    <subcellularLocation>
        <location>Cell membrane</location>
        <topology>Single-pass membrane protein</topology>
    </subcellularLocation>
    <text evidence="1">Colocalized with FtsZ to the nascent septal site.</text>
</comment>
<comment type="similarity">
    <text evidence="1">Belongs to the EzrA family.</text>
</comment>
<name>EZRA_LISMF</name>
<evidence type="ECO:0000255" key="1">
    <source>
        <dbReference type="HAMAP-Rule" id="MF_00728"/>
    </source>
</evidence>
<dbReference type="EMBL" id="AE017262">
    <property type="protein sequence ID" value="AAT04391.1"/>
    <property type="molecule type" value="Genomic_DNA"/>
</dbReference>
<dbReference type="RefSeq" id="WP_003726006.1">
    <property type="nucleotide sequence ID" value="NC_002973.6"/>
</dbReference>
<dbReference type="SMR" id="Q71Z73"/>
<dbReference type="DNASU" id="2798773"/>
<dbReference type="KEGG" id="lmf:LMOf2365_1616"/>
<dbReference type="HOGENOM" id="CLU_034079_2_0_9"/>
<dbReference type="GO" id="GO:0005886">
    <property type="term" value="C:plasma membrane"/>
    <property type="evidence" value="ECO:0007669"/>
    <property type="project" value="UniProtKB-SubCell"/>
</dbReference>
<dbReference type="GO" id="GO:0005940">
    <property type="term" value="C:septin ring"/>
    <property type="evidence" value="ECO:0007669"/>
    <property type="project" value="InterPro"/>
</dbReference>
<dbReference type="GO" id="GO:0000917">
    <property type="term" value="P:division septum assembly"/>
    <property type="evidence" value="ECO:0007669"/>
    <property type="project" value="UniProtKB-KW"/>
</dbReference>
<dbReference type="GO" id="GO:0000921">
    <property type="term" value="P:septin ring assembly"/>
    <property type="evidence" value="ECO:0007669"/>
    <property type="project" value="InterPro"/>
</dbReference>
<dbReference type="HAMAP" id="MF_00728">
    <property type="entry name" value="EzrA"/>
    <property type="match status" value="1"/>
</dbReference>
<dbReference type="InterPro" id="IPR010379">
    <property type="entry name" value="EzrA"/>
</dbReference>
<dbReference type="NCBIfam" id="NF003408">
    <property type="entry name" value="PRK04778.1-2"/>
    <property type="match status" value="1"/>
</dbReference>
<dbReference type="Pfam" id="PF06160">
    <property type="entry name" value="EzrA"/>
    <property type="match status" value="1"/>
</dbReference>
<feature type="chain" id="PRO_0000172875" description="Septation ring formation regulator EzrA">
    <location>
        <begin position="1"/>
        <end position="571"/>
    </location>
</feature>
<feature type="topological domain" description="Extracellular" evidence="1">
    <location>
        <begin position="1"/>
        <end position="3"/>
    </location>
</feature>
<feature type="transmembrane region" description="Helical" evidence="1">
    <location>
        <begin position="4"/>
        <end position="22"/>
    </location>
</feature>
<feature type="topological domain" description="Cytoplasmic" evidence="1">
    <location>
        <begin position="23"/>
        <end position="571"/>
    </location>
</feature>
<feature type="coiled-coil region" evidence="1">
    <location>
        <begin position="22"/>
        <end position="43"/>
    </location>
</feature>
<feature type="coiled-coil region" evidence="1">
    <location>
        <begin position="127"/>
        <end position="147"/>
    </location>
</feature>
<feature type="coiled-coil region" evidence="1">
    <location>
        <begin position="194"/>
        <end position="214"/>
    </location>
</feature>
<feature type="coiled-coil region" evidence="1">
    <location>
        <begin position="248"/>
        <end position="298"/>
    </location>
</feature>
<feature type="coiled-coil region" evidence="1">
    <location>
        <begin position="326"/>
        <end position="374"/>
    </location>
</feature>
<feature type="coiled-coil region" evidence="1">
    <location>
        <begin position="400"/>
        <end position="437"/>
    </location>
</feature>
<feature type="coiled-coil region" evidence="1">
    <location>
        <begin position="478"/>
        <end position="529"/>
    </location>
</feature>
<sequence>MYYMLIGFIIVVIAVIGAGYILKRKHYQRINELEEKKIKLRERPVIDELSKVKKLKLTGQTEALFESWRSSWDEIETRLFPDLEEVLLEAEMNTDRYKFRSATHAENDIEQMLVVIEKQMDQILGGLKELLISEEKNAKESRATKEKFAELRREVLTRGFKLGETLPYIETKLSELSESLNSYDSLTDQGDHLEAREIVIVVQKEMQVIEAQMERIPSLLHETDTILPEEMTKLRAGYEEMVRKGYYLAQMELDKEISRMKNQIDKMKKNVINLDLDEAEQGVEELHNEIDLFYDTLEHEAEARHFVKENHSPTSDKLQRQNAVSDALAEQITEVKQTYHVAEDDLAVYLKTSAKLSEAKENFEQLTALIASGEIAYSAAQDTLKEIDAALITISAEQDKFAEELRSLRKDELEARDDAERMRRAIITLDRKMERERLPGLPEEYLSLREHMGESINALEKRLEEKPLNMKAVSQDWRIAEEDLTHLTEKAEEMMENVRLVEHVIQYANRYRLRNKELADELVQAENHFYNDYQYKKALEIAVTALEKVETGAFKKVEKAYESKVSVDDIE</sequence>
<accession>Q71Z73</accession>
<organism>
    <name type="scientific">Listeria monocytogenes serotype 4b (strain F2365)</name>
    <dbReference type="NCBI Taxonomy" id="265669"/>
    <lineage>
        <taxon>Bacteria</taxon>
        <taxon>Bacillati</taxon>
        <taxon>Bacillota</taxon>
        <taxon>Bacilli</taxon>
        <taxon>Bacillales</taxon>
        <taxon>Listeriaceae</taxon>
        <taxon>Listeria</taxon>
    </lineage>
</organism>
<protein>
    <recommendedName>
        <fullName evidence="1">Septation ring formation regulator EzrA</fullName>
    </recommendedName>
</protein>
<keyword id="KW-0131">Cell cycle</keyword>
<keyword id="KW-0132">Cell division</keyword>
<keyword id="KW-1003">Cell membrane</keyword>
<keyword id="KW-0175">Coiled coil</keyword>
<keyword id="KW-0472">Membrane</keyword>
<keyword id="KW-0717">Septation</keyword>
<keyword id="KW-0812">Transmembrane</keyword>
<keyword id="KW-1133">Transmembrane helix</keyword>
<proteinExistence type="inferred from homology"/>